<evidence type="ECO:0000255" key="1">
    <source>
        <dbReference type="HAMAP-Rule" id="MF_00451"/>
    </source>
</evidence>
<accession>A7HJ26</accession>
<organism>
    <name type="scientific">Fervidobacterium nodosum (strain ATCC 35602 / DSM 5306 / Rt17-B1)</name>
    <dbReference type="NCBI Taxonomy" id="381764"/>
    <lineage>
        <taxon>Bacteria</taxon>
        <taxon>Thermotogati</taxon>
        <taxon>Thermotogota</taxon>
        <taxon>Thermotogae</taxon>
        <taxon>Thermotogales</taxon>
        <taxon>Fervidobacteriaceae</taxon>
        <taxon>Fervidobacterium</taxon>
    </lineage>
</organism>
<reference key="1">
    <citation type="submission" date="2007-07" db="EMBL/GenBank/DDBJ databases">
        <title>Complete sequence of Fervidobacterium nodosum Rt17-B1.</title>
        <authorList>
            <consortium name="US DOE Joint Genome Institute"/>
            <person name="Copeland A."/>
            <person name="Lucas S."/>
            <person name="Lapidus A."/>
            <person name="Barry K."/>
            <person name="Glavina del Rio T."/>
            <person name="Dalin E."/>
            <person name="Tice H."/>
            <person name="Pitluck S."/>
            <person name="Saunders E."/>
            <person name="Brettin T."/>
            <person name="Bruce D."/>
            <person name="Detter J.C."/>
            <person name="Han C."/>
            <person name="Schmutz J."/>
            <person name="Larimer F."/>
            <person name="Land M."/>
            <person name="Hauser L."/>
            <person name="Kyrpides N."/>
            <person name="Mikhailova N."/>
            <person name="Nelson K."/>
            <person name="Gogarten J.P."/>
            <person name="Noll K."/>
            <person name="Richardson P."/>
        </authorList>
    </citation>
    <scope>NUCLEOTIDE SEQUENCE [LARGE SCALE GENOMIC DNA]</scope>
    <source>
        <strain>ATCC 35602 / DSM 5306 / Rt17-B1</strain>
    </source>
</reference>
<feature type="chain" id="PRO_1000072362" description="Nucleoside diphosphate kinase">
    <location>
        <begin position="1"/>
        <end position="147"/>
    </location>
</feature>
<feature type="active site" description="Pros-phosphohistidine intermediate" evidence="1">
    <location>
        <position position="115"/>
    </location>
</feature>
<feature type="binding site" evidence="1">
    <location>
        <position position="9"/>
    </location>
    <ligand>
        <name>ATP</name>
        <dbReference type="ChEBI" id="CHEBI:30616"/>
    </ligand>
</feature>
<feature type="binding site" evidence="1">
    <location>
        <position position="57"/>
    </location>
    <ligand>
        <name>ATP</name>
        <dbReference type="ChEBI" id="CHEBI:30616"/>
    </ligand>
</feature>
<feature type="binding site" evidence="1">
    <location>
        <position position="85"/>
    </location>
    <ligand>
        <name>ATP</name>
        <dbReference type="ChEBI" id="CHEBI:30616"/>
    </ligand>
</feature>
<feature type="binding site" evidence="1">
    <location>
        <position position="91"/>
    </location>
    <ligand>
        <name>ATP</name>
        <dbReference type="ChEBI" id="CHEBI:30616"/>
    </ligand>
</feature>
<feature type="binding site" evidence="1">
    <location>
        <position position="102"/>
    </location>
    <ligand>
        <name>ATP</name>
        <dbReference type="ChEBI" id="CHEBI:30616"/>
    </ligand>
</feature>
<feature type="binding site" evidence="1">
    <location>
        <position position="112"/>
    </location>
    <ligand>
        <name>ATP</name>
        <dbReference type="ChEBI" id="CHEBI:30616"/>
    </ligand>
</feature>
<comment type="function">
    <text evidence="1">Major role in the synthesis of nucleoside triphosphates other than ATP. The ATP gamma phosphate is transferred to the NDP beta phosphate via a ping-pong mechanism, using a phosphorylated active-site intermediate.</text>
</comment>
<comment type="catalytic activity">
    <reaction evidence="1">
        <text>a 2'-deoxyribonucleoside 5'-diphosphate + ATP = a 2'-deoxyribonucleoside 5'-triphosphate + ADP</text>
        <dbReference type="Rhea" id="RHEA:44640"/>
        <dbReference type="ChEBI" id="CHEBI:30616"/>
        <dbReference type="ChEBI" id="CHEBI:61560"/>
        <dbReference type="ChEBI" id="CHEBI:73316"/>
        <dbReference type="ChEBI" id="CHEBI:456216"/>
        <dbReference type="EC" id="2.7.4.6"/>
    </reaction>
</comment>
<comment type="catalytic activity">
    <reaction evidence="1">
        <text>a ribonucleoside 5'-diphosphate + ATP = a ribonucleoside 5'-triphosphate + ADP</text>
        <dbReference type="Rhea" id="RHEA:18113"/>
        <dbReference type="ChEBI" id="CHEBI:30616"/>
        <dbReference type="ChEBI" id="CHEBI:57930"/>
        <dbReference type="ChEBI" id="CHEBI:61557"/>
        <dbReference type="ChEBI" id="CHEBI:456216"/>
        <dbReference type="EC" id="2.7.4.6"/>
    </reaction>
</comment>
<comment type="cofactor">
    <cofactor evidence="1">
        <name>Mg(2+)</name>
        <dbReference type="ChEBI" id="CHEBI:18420"/>
    </cofactor>
</comment>
<comment type="subunit">
    <text evidence="1">Homotetramer.</text>
</comment>
<comment type="subcellular location">
    <subcellularLocation>
        <location evidence="1">Cytoplasm</location>
    </subcellularLocation>
</comment>
<comment type="similarity">
    <text evidence="1">Belongs to the NDK family.</text>
</comment>
<dbReference type="EC" id="2.7.4.6" evidence="1"/>
<dbReference type="EMBL" id="CP000771">
    <property type="protein sequence ID" value="ABS59909.1"/>
    <property type="molecule type" value="Genomic_DNA"/>
</dbReference>
<dbReference type="RefSeq" id="WP_011993232.1">
    <property type="nucleotide sequence ID" value="NC_009718.1"/>
</dbReference>
<dbReference type="SMR" id="A7HJ26"/>
<dbReference type="STRING" id="381764.Fnod_0038"/>
<dbReference type="KEGG" id="fno:Fnod_0038"/>
<dbReference type="eggNOG" id="COG0105">
    <property type="taxonomic scope" value="Bacteria"/>
</dbReference>
<dbReference type="HOGENOM" id="CLU_060216_6_3_0"/>
<dbReference type="OrthoDB" id="9801161at2"/>
<dbReference type="Proteomes" id="UP000002415">
    <property type="component" value="Chromosome"/>
</dbReference>
<dbReference type="GO" id="GO:0005737">
    <property type="term" value="C:cytoplasm"/>
    <property type="evidence" value="ECO:0007669"/>
    <property type="project" value="UniProtKB-SubCell"/>
</dbReference>
<dbReference type="GO" id="GO:0005524">
    <property type="term" value="F:ATP binding"/>
    <property type="evidence" value="ECO:0007669"/>
    <property type="project" value="UniProtKB-UniRule"/>
</dbReference>
<dbReference type="GO" id="GO:0046872">
    <property type="term" value="F:metal ion binding"/>
    <property type="evidence" value="ECO:0007669"/>
    <property type="project" value="UniProtKB-KW"/>
</dbReference>
<dbReference type="GO" id="GO:0004550">
    <property type="term" value="F:nucleoside diphosphate kinase activity"/>
    <property type="evidence" value="ECO:0007669"/>
    <property type="project" value="UniProtKB-UniRule"/>
</dbReference>
<dbReference type="GO" id="GO:0006241">
    <property type="term" value="P:CTP biosynthetic process"/>
    <property type="evidence" value="ECO:0007669"/>
    <property type="project" value="UniProtKB-UniRule"/>
</dbReference>
<dbReference type="GO" id="GO:0006183">
    <property type="term" value="P:GTP biosynthetic process"/>
    <property type="evidence" value="ECO:0007669"/>
    <property type="project" value="UniProtKB-UniRule"/>
</dbReference>
<dbReference type="GO" id="GO:0006228">
    <property type="term" value="P:UTP biosynthetic process"/>
    <property type="evidence" value="ECO:0007669"/>
    <property type="project" value="UniProtKB-UniRule"/>
</dbReference>
<dbReference type="CDD" id="cd04413">
    <property type="entry name" value="NDPk_I"/>
    <property type="match status" value="1"/>
</dbReference>
<dbReference type="FunFam" id="3.30.70.141:FF:000003">
    <property type="entry name" value="Nucleoside diphosphate kinase"/>
    <property type="match status" value="1"/>
</dbReference>
<dbReference type="Gene3D" id="3.30.70.141">
    <property type="entry name" value="Nucleoside diphosphate kinase-like domain"/>
    <property type="match status" value="1"/>
</dbReference>
<dbReference type="HAMAP" id="MF_00451">
    <property type="entry name" value="NDP_kinase"/>
    <property type="match status" value="1"/>
</dbReference>
<dbReference type="InterPro" id="IPR034907">
    <property type="entry name" value="NDK-like_dom"/>
</dbReference>
<dbReference type="InterPro" id="IPR036850">
    <property type="entry name" value="NDK-like_dom_sf"/>
</dbReference>
<dbReference type="InterPro" id="IPR001564">
    <property type="entry name" value="Nucleoside_diP_kinase"/>
</dbReference>
<dbReference type="NCBIfam" id="NF001908">
    <property type="entry name" value="PRK00668.1"/>
    <property type="match status" value="1"/>
</dbReference>
<dbReference type="PANTHER" id="PTHR11349">
    <property type="entry name" value="NUCLEOSIDE DIPHOSPHATE KINASE"/>
    <property type="match status" value="1"/>
</dbReference>
<dbReference type="Pfam" id="PF00334">
    <property type="entry name" value="NDK"/>
    <property type="match status" value="1"/>
</dbReference>
<dbReference type="PRINTS" id="PR01243">
    <property type="entry name" value="NUCDPKINASE"/>
</dbReference>
<dbReference type="SMART" id="SM00562">
    <property type="entry name" value="NDK"/>
    <property type="match status" value="1"/>
</dbReference>
<dbReference type="SUPFAM" id="SSF54919">
    <property type="entry name" value="Nucleoside diphosphate kinase, NDK"/>
    <property type="match status" value="1"/>
</dbReference>
<dbReference type="PROSITE" id="PS51374">
    <property type="entry name" value="NDPK_LIKE"/>
    <property type="match status" value="1"/>
</dbReference>
<sequence length="147" mass="16755">MERTFVILKPNAVRRGLVGEILKRFEQRGIKIVGLKFLKMTREQAEKLYEPHKGKQFYDELLEFMLSGPIVAVILEAPRCLELVRHIVGATDPLKAEAGSIRGEFALTVTKNLIHASDSTDNFIRESSIFFSPSEIIDYYLDVQDDI</sequence>
<name>NDK_FERNB</name>
<proteinExistence type="inferred from homology"/>
<keyword id="KW-0067">ATP-binding</keyword>
<keyword id="KW-0963">Cytoplasm</keyword>
<keyword id="KW-0418">Kinase</keyword>
<keyword id="KW-0460">Magnesium</keyword>
<keyword id="KW-0479">Metal-binding</keyword>
<keyword id="KW-0546">Nucleotide metabolism</keyword>
<keyword id="KW-0547">Nucleotide-binding</keyword>
<keyword id="KW-0597">Phosphoprotein</keyword>
<keyword id="KW-1185">Reference proteome</keyword>
<keyword id="KW-0808">Transferase</keyword>
<gene>
    <name evidence="1" type="primary">ndk</name>
    <name type="ordered locus">Fnod_0038</name>
</gene>
<protein>
    <recommendedName>
        <fullName evidence="1">Nucleoside diphosphate kinase</fullName>
        <shortName evidence="1">NDK</shortName>
        <shortName evidence="1">NDP kinase</shortName>
        <ecNumber evidence="1">2.7.4.6</ecNumber>
    </recommendedName>
    <alternativeName>
        <fullName evidence="1">Nucleoside-2-P kinase</fullName>
    </alternativeName>
</protein>